<evidence type="ECO:0000250" key="1">
    <source>
        <dbReference type="UniProtKB" id="O95639"/>
    </source>
</evidence>
<evidence type="ECO:0000255" key="2">
    <source>
        <dbReference type="PROSITE-ProRule" id="PRU00047"/>
    </source>
</evidence>
<evidence type="ECO:0000255" key="3">
    <source>
        <dbReference type="PROSITE-ProRule" id="PRU00723"/>
    </source>
</evidence>
<evidence type="ECO:0000256" key="4">
    <source>
        <dbReference type="SAM" id="MobiDB-lite"/>
    </source>
</evidence>
<evidence type="ECO:0000269" key="5">
    <source>
    </source>
</evidence>
<evidence type="ECO:0000269" key="6">
    <source>
    </source>
</evidence>
<evidence type="ECO:0000269" key="7">
    <source>
    </source>
</evidence>
<evidence type="ECO:0000305" key="8"/>
<evidence type="ECO:0000312" key="9">
    <source>
        <dbReference type="EMBL" id="AAA67954.1"/>
    </source>
</evidence>
<evidence type="ECO:0000312" key="10">
    <source>
        <dbReference type="EMBL" id="AAF51453.1"/>
    </source>
</evidence>
<evidence type="ECO:0000312" key="11">
    <source>
        <dbReference type="EMBL" id="ABE01239.1"/>
    </source>
</evidence>
<evidence type="ECO:0000312" key="12">
    <source>
        <dbReference type="FlyBase" id="FBgn0015621"/>
    </source>
</evidence>
<name>CPSF4_DROME</name>
<accession>Q9VPT8</accession>
<accession>A0JQ42</accession>
<accession>Q24081</accession>
<organism>
    <name type="scientific">Drosophila melanogaster</name>
    <name type="common">Fruit fly</name>
    <dbReference type="NCBI Taxonomy" id="7227"/>
    <lineage>
        <taxon>Eukaryota</taxon>
        <taxon>Metazoa</taxon>
        <taxon>Ecdysozoa</taxon>
        <taxon>Arthropoda</taxon>
        <taxon>Hexapoda</taxon>
        <taxon>Insecta</taxon>
        <taxon>Pterygota</taxon>
        <taxon>Neoptera</taxon>
        <taxon>Endopterygota</taxon>
        <taxon>Diptera</taxon>
        <taxon>Brachycera</taxon>
        <taxon>Muscomorpha</taxon>
        <taxon>Ephydroidea</taxon>
        <taxon>Drosophilidae</taxon>
        <taxon>Drosophila</taxon>
        <taxon>Sophophora</taxon>
    </lineage>
</organism>
<sequence>MDILLANVSGLQFKAERDLIEQVGAIPLPFYGMDKSIAAVCNFITRNGQECDKGSACPFRHIRGDRTIVCKHWLRGLCKKGDQCEFLHEYDMTKMPECYFYSRFNACHNKECPFLHIDPQSKVKDCPWYKRGFCRHGPHCRHQHLRRVLCMDYLAGFCPEGPSCKHMHPHFELPPLAELGKDQLHKKLPTCHYCGELGHKANSCKQYVGSLEHRNNINAMDHSGGHSGGYSGHSGHIEGADDMQSNHHSQPHGPGFVKVPTPLEEITCYKCGNKGHYANKCPKGHLAFLSNQHSHK</sequence>
<feature type="chain" id="PRO_0000422156" description="Cleavage and polyadenylation specificity factor subunit 4">
    <location>
        <begin position="1"/>
        <end position="296"/>
    </location>
</feature>
<feature type="zinc finger region" description="C3H1-type 1" evidence="3">
    <location>
        <begin position="35"/>
        <end position="63"/>
    </location>
</feature>
<feature type="zinc finger region" description="C3H1-type 2" evidence="3">
    <location>
        <begin position="64"/>
        <end position="91"/>
    </location>
</feature>
<feature type="zinc finger region" description="C3H1-type 3" evidence="3">
    <location>
        <begin position="92"/>
        <end position="119"/>
    </location>
</feature>
<feature type="zinc finger region" description="C3H1-type 4" evidence="3">
    <location>
        <begin position="120"/>
        <end position="147"/>
    </location>
</feature>
<feature type="zinc finger region" description="C3H1-type 5" evidence="3">
    <location>
        <begin position="149"/>
        <end position="171"/>
    </location>
</feature>
<feature type="zinc finger region" description="CCHC-type 1" evidence="2">
    <location>
        <begin position="189"/>
        <end position="206"/>
    </location>
</feature>
<feature type="zinc finger region" description="CCHC-type 2" evidence="2">
    <location>
        <begin position="266"/>
        <end position="283"/>
    </location>
</feature>
<feature type="region of interest" description="Disordered" evidence="4">
    <location>
        <begin position="222"/>
        <end position="254"/>
    </location>
</feature>
<feature type="sequence conflict" description="In Ref. 1; AAA67954." evidence="8" ref="1">
    <original>G</original>
    <variation>A</variation>
    <location>
        <position position="161"/>
    </location>
</feature>
<proteinExistence type="evidence at protein level"/>
<gene>
    <name type="primary">Clp</name>
    <name evidence="12" type="synonym">CPSF30</name>
    <name evidence="9" type="synonym">Ssb-c6a</name>
    <name type="ORF">CG3642</name>
</gene>
<protein>
    <recommendedName>
        <fullName evidence="1">Cleavage and polyadenylation specificity factor subunit 4</fullName>
        <ecNumber evidence="6">3.1.-.-</ecNumber>
    </recommendedName>
    <alternativeName>
        <fullName evidence="1">Cleavage and polyadenylation specificity factor 30 kDa subunit</fullName>
    </alternativeName>
    <alternativeName>
        <fullName evidence="10">Protein clipper</fullName>
    </alternativeName>
</protein>
<keyword id="KW-0217">Developmental protein</keyword>
<keyword id="KW-0255">Endonuclease</keyword>
<keyword id="KW-0378">Hydrolase</keyword>
<keyword id="KW-0479">Metal-binding</keyword>
<keyword id="KW-0507">mRNA processing</keyword>
<keyword id="KW-0540">Nuclease</keyword>
<keyword id="KW-0539">Nucleus</keyword>
<keyword id="KW-1185">Reference proteome</keyword>
<keyword id="KW-0677">Repeat</keyword>
<keyword id="KW-0694">RNA-binding</keyword>
<keyword id="KW-0862">Zinc</keyword>
<keyword id="KW-0863">Zinc-finger</keyword>
<reference evidence="9" key="1">
    <citation type="journal article" date="1994" name="Gene">
        <title>RNA- and single-stranded DNA-binding (SSB) proteins expressed during Drosophila melanogaster oogenesis: a homolog of bacterial and eukaryotic mitochondrial SSBs.</title>
        <authorList>
            <person name="Stroumbakis N.D."/>
            <person name="Li Z."/>
            <person name="Tolias P.P."/>
        </authorList>
    </citation>
    <scope>NUCLEOTIDE SEQUENCE [MRNA]</scope>
    <source>
        <strain evidence="9">Canton-S</strain>
        <tissue evidence="9">Ovary</tissue>
    </source>
</reference>
<reference evidence="10" key="2">
    <citation type="journal article" date="2000" name="Science">
        <title>The genome sequence of Drosophila melanogaster.</title>
        <authorList>
            <person name="Adams M.D."/>
            <person name="Celniker S.E."/>
            <person name="Holt R.A."/>
            <person name="Evans C.A."/>
            <person name="Gocayne J.D."/>
            <person name="Amanatides P.G."/>
            <person name="Scherer S.E."/>
            <person name="Li P.W."/>
            <person name="Hoskins R.A."/>
            <person name="Galle R.F."/>
            <person name="George R.A."/>
            <person name="Lewis S.E."/>
            <person name="Richards S."/>
            <person name="Ashburner M."/>
            <person name="Henderson S.N."/>
            <person name="Sutton G.G."/>
            <person name="Wortman J.R."/>
            <person name="Yandell M.D."/>
            <person name="Zhang Q."/>
            <person name="Chen L.X."/>
            <person name="Brandon R.C."/>
            <person name="Rogers Y.-H.C."/>
            <person name="Blazej R.G."/>
            <person name="Champe M."/>
            <person name="Pfeiffer B.D."/>
            <person name="Wan K.H."/>
            <person name="Doyle C."/>
            <person name="Baxter E.G."/>
            <person name="Helt G."/>
            <person name="Nelson C.R."/>
            <person name="Miklos G.L.G."/>
            <person name="Abril J.F."/>
            <person name="Agbayani A."/>
            <person name="An H.-J."/>
            <person name="Andrews-Pfannkoch C."/>
            <person name="Baldwin D."/>
            <person name="Ballew R.M."/>
            <person name="Basu A."/>
            <person name="Baxendale J."/>
            <person name="Bayraktaroglu L."/>
            <person name="Beasley E.M."/>
            <person name="Beeson K.Y."/>
            <person name="Benos P.V."/>
            <person name="Berman B.P."/>
            <person name="Bhandari D."/>
            <person name="Bolshakov S."/>
            <person name="Borkova D."/>
            <person name="Botchan M.R."/>
            <person name="Bouck J."/>
            <person name="Brokstein P."/>
            <person name="Brottier P."/>
            <person name="Burtis K.C."/>
            <person name="Busam D.A."/>
            <person name="Butler H."/>
            <person name="Cadieu E."/>
            <person name="Center A."/>
            <person name="Chandra I."/>
            <person name="Cherry J.M."/>
            <person name="Cawley S."/>
            <person name="Dahlke C."/>
            <person name="Davenport L.B."/>
            <person name="Davies P."/>
            <person name="de Pablos B."/>
            <person name="Delcher A."/>
            <person name="Deng Z."/>
            <person name="Mays A.D."/>
            <person name="Dew I."/>
            <person name="Dietz S.M."/>
            <person name="Dodson K."/>
            <person name="Doup L.E."/>
            <person name="Downes M."/>
            <person name="Dugan-Rocha S."/>
            <person name="Dunkov B.C."/>
            <person name="Dunn P."/>
            <person name="Durbin K.J."/>
            <person name="Evangelista C.C."/>
            <person name="Ferraz C."/>
            <person name="Ferriera S."/>
            <person name="Fleischmann W."/>
            <person name="Fosler C."/>
            <person name="Gabrielian A.E."/>
            <person name="Garg N.S."/>
            <person name="Gelbart W.M."/>
            <person name="Glasser K."/>
            <person name="Glodek A."/>
            <person name="Gong F."/>
            <person name="Gorrell J.H."/>
            <person name="Gu Z."/>
            <person name="Guan P."/>
            <person name="Harris M."/>
            <person name="Harris N.L."/>
            <person name="Harvey D.A."/>
            <person name="Heiman T.J."/>
            <person name="Hernandez J.R."/>
            <person name="Houck J."/>
            <person name="Hostin D."/>
            <person name="Houston K.A."/>
            <person name="Howland T.J."/>
            <person name="Wei M.-H."/>
            <person name="Ibegwam C."/>
            <person name="Jalali M."/>
            <person name="Kalush F."/>
            <person name="Karpen G.H."/>
            <person name="Ke Z."/>
            <person name="Kennison J.A."/>
            <person name="Ketchum K.A."/>
            <person name="Kimmel B.E."/>
            <person name="Kodira C.D."/>
            <person name="Kraft C.L."/>
            <person name="Kravitz S."/>
            <person name="Kulp D."/>
            <person name="Lai Z."/>
            <person name="Lasko P."/>
            <person name="Lei Y."/>
            <person name="Levitsky A.A."/>
            <person name="Li J.H."/>
            <person name="Li Z."/>
            <person name="Liang Y."/>
            <person name="Lin X."/>
            <person name="Liu X."/>
            <person name="Mattei B."/>
            <person name="McIntosh T.C."/>
            <person name="McLeod M.P."/>
            <person name="McPherson D."/>
            <person name="Merkulov G."/>
            <person name="Milshina N.V."/>
            <person name="Mobarry C."/>
            <person name="Morris J."/>
            <person name="Moshrefi A."/>
            <person name="Mount S.M."/>
            <person name="Moy M."/>
            <person name="Murphy B."/>
            <person name="Murphy L."/>
            <person name="Muzny D.M."/>
            <person name="Nelson D.L."/>
            <person name="Nelson D.R."/>
            <person name="Nelson K.A."/>
            <person name="Nixon K."/>
            <person name="Nusskern D.R."/>
            <person name="Pacleb J.M."/>
            <person name="Palazzolo M."/>
            <person name="Pittman G.S."/>
            <person name="Pan S."/>
            <person name="Pollard J."/>
            <person name="Puri V."/>
            <person name="Reese M.G."/>
            <person name="Reinert K."/>
            <person name="Remington K."/>
            <person name="Saunders R.D.C."/>
            <person name="Scheeler F."/>
            <person name="Shen H."/>
            <person name="Shue B.C."/>
            <person name="Siden-Kiamos I."/>
            <person name="Simpson M."/>
            <person name="Skupski M.P."/>
            <person name="Smith T.J."/>
            <person name="Spier E."/>
            <person name="Spradling A.C."/>
            <person name="Stapleton M."/>
            <person name="Strong R."/>
            <person name="Sun E."/>
            <person name="Svirskas R."/>
            <person name="Tector C."/>
            <person name="Turner R."/>
            <person name="Venter E."/>
            <person name="Wang A.H."/>
            <person name="Wang X."/>
            <person name="Wang Z.-Y."/>
            <person name="Wassarman D.A."/>
            <person name="Weinstock G.M."/>
            <person name="Weissenbach J."/>
            <person name="Williams S.M."/>
            <person name="Woodage T."/>
            <person name="Worley K.C."/>
            <person name="Wu D."/>
            <person name="Yang S."/>
            <person name="Yao Q.A."/>
            <person name="Ye J."/>
            <person name="Yeh R.-F."/>
            <person name="Zaveri J.S."/>
            <person name="Zhan M."/>
            <person name="Zhang G."/>
            <person name="Zhao Q."/>
            <person name="Zheng L."/>
            <person name="Zheng X.H."/>
            <person name="Zhong F.N."/>
            <person name="Zhong W."/>
            <person name="Zhou X."/>
            <person name="Zhu S.C."/>
            <person name="Zhu X."/>
            <person name="Smith H.O."/>
            <person name="Gibbs R.A."/>
            <person name="Myers E.W."/>
            <person name="Rubin G.M."/>
            <person name="Venter J.C."/>
        </authorList>
    </citation>
    <scope>NUCLEOTIDE SEQUENCE [LARGE SCALE GENOMIC DNA]</scope>
    <source>
        <strain>Berkeley</strain>
    </source>
</reference>
<reference evidence="10" key="3">
    <citation type="journal article" date="2002" name="Genome Biol.">
        <title>Annotation of the Drosophila melanogaster euchromatic genome: a systematic review.</title>
        <authorList>
            <person name="Misra S."/>
            <person name="Crosby M.A."/>
            <person name="Mungall C.J."/>
            <person name="Matthews B.B."/>
            <person name="Campbell K.S."/>
            <person name="Hradecky P."/>
            <person name="Huang Y."/>
            <person name="Kaminker J.S."/>
            <person name="Millburn G.H."/>
            <person name="Prochnik S.E."/>
            <person name="Smith C.D."/>
            <person name="Tupy J.L."/>
            <person name="Whitfield E.J."/>
            <person name="Bayraktaroglu L."/>
            <person name="Berman B.P."/>
            <person name="Bettencourt B.R."/>
            <person name="Celniker S.E."/>
            <person name="de Grey A.D.N.J."/>
            <person name="Drysdale R.A."/>
            <person name="Harris N.L."/>
            <person name="Richter J."/>
            <person name="Russo S."/>
            <person name="Schroeder A.J."/>
            <person name="Shu S.Q."/>
            <person name="Stapleton M."/>
            <person name="Yamada C."/>
            <person name="Ashburner M."/>
            <person name="Gelbart W.M."/>
            <person name="Rubin G.M."/>
            <person name="Lewis S.E."/>
        </authorList>
    </citation>
    <scope>GENOME REANNOTATION</scope>
    <source>
        <strain>Berkeley</strain>
    </source>
</reference>
<reference evidence="11" key="4">
    <citation type="submission" date="2006-03" db="EMBL/GenBank/DDBJ databases">
        <authorList>
            <person name="Stapleton M."/>
            <person name="Carlson J."/>
            <person name="Chavez C."/>
            <person name="Frise E."/>
            <person name="George R."/>
            <person name="Kapadia B."/>
            <person name="Pacleb J."/>
            <person name="Park S."/>
            <person name="Wan K."/>
            <person name="Yu C."/>
            <person name="Celniker S."/>
        </authorList>
    </citation>
    <scope>NUCLEOTIDE SEQUENCE [LARGE SCALE MRNA]</scope>
    <source>
        <strain>Berkeley</strain>
    </source>
</reference>
<reference evidence="8" key="5">
    <citation type="journal article" date="1996" name="Mol. Cell. Biol.">
        <title>Cleavage of RNA hairpins mediated by a developmentally regulated CCCH zinc finger protein.</title>
        <authorList>
            <person name="Bai C."/>
            <person name="Tolias P.P."/>
        </authorList>
    </citation>
    <scope>FUNCTION</scope>
    <scope>TISSUE SPECIFICITY</scope>
    <scope>DEVELOPMENTAL STAGE</scope>
    <scope>DOMAIN</scope>
    <source>
        <tissue evidence="6">Ovary</tissue>
    </source>
</reference>
<reference evidence="8" key="6">
    <citation type="journal article" date="1998" name="Nucleic Acids Res.">
        <title>Drosophila clipper/CPSF 30K is a post-transcriptionally regulated nuclear protein that binds RNA containing GC clusters.</title>
        <authorList>
            <person name="Bai C."/>
            <person name="Tolias P.P."/>
        </authorList>
    </citation>
    <scope>FUNCTION</scope>
    <scope>SUBCELLULAR LOCATION</scope>
    <scope>TISSUE SPECIFICITY</scope>
    <scope>DEVELOPMENTAL STAGE</scope>
    <scope>DOMAIN</scope>
</reference>
<reference evidence="8" key="7">
    <citation type="journal article" date="2009" name="Mol. Cell">
        <title>A core complex of CPSF73, CPSF100, and Symplekin may form two different cleavage factors for processing of poly(A) and histone mRNAs.</title>
        <authorList>
            <person name="Sullivan K.D."/>
            <person name="Steiniger M."/>
            <person name="Marzluff W.F."/>
        </authorList>
    </citation>
    <scope>IDENTIFICATION IN THE CPSF COMPLEX</scope>
</reference>
<dbReference type="EC" id="3.1.-.-" evidence="6"/>
<dbReference type="EMBL" id="U26549">
    <property type="protein sequence ID" value="AAA67954.1"/>
    <property type="molecule type" value="mRNA"/>
</dbReference>
<dbReference type="EMBL" id="AE014134">
    <property type="protein sequence ID" value="AAF51453.1"/>
    <property type="molecule type" value="Genomic_DNA"/>
</dbReference>
<dbReference type="EMBL" id="BT025009">
    <property type="protein sequence ID" value="ABE01239.1"/>
    <property type="molecule type" value="mRNA"/>
</dbReference>
<dbReference type="EMBL" id="BT029412">
    <property type="protein sequence ID" value="ABK57069.1"/>
    <property type="status" value="ALT_INIT"/>
    <property type="molecule type" value="mRNA"/>
</dbReference>
<dbReference type="RefSeq" id="NP_477156.1">
    <property type="nucleotide sequence ID" value="NM_057808.2"/>
</dbReference>
<dbReference type="BioGRID" id="59513">
    <property type="interactions" value="26"/>
</dbReference>
<dbReference type="FunCoup" id="Q9VPT8">
    <property type="interactions" value="1202"/>
</dbReference>
<dbReference type="IntAct" id="Q9VPT8">
    <property type="interactions" value="11"/>
</dbReference>
<dbReference type="STRING" id="7227.FBpp0077676"/>
<dbReference type="PaxDb" id="7227-FBpp0077676"/>
<dbReference type="DNASU" id="33259"/>
<dbReference type="EnsemblMetazoa" id="FBtr0078011">
    <property type="protein sequence ID" value="FBpp0077676"/>
    <property type="gene ID" value="FBgn0015621"/>
</dbReference>
<dbReference type="GeneID" id="33259"/>
<dbReference type="KEGG" id="dme:Dmel_CG3642"/>
<dbReference type="UCSC" id="CG3642-RA">
    <property type="organism name" value="d. melanogaster"/>
</dbReference>
<dbReference type="AGR" id="FB:FBgn0015621"/>
<dbReference type="CTD" id="33259"/>
<dbReference type="FlyBase" id="FBgn0015621">
    <property type="gene designation" value="Clp"/>
</dbReference>
<dbReference type="VEuPathDB" id="VectorBase:FBgn0015621"/>
<dbReference type="eggNOG" id="KOG1040">
    <property type="taxonomic scope" value="Eukaryota"/>
</dbReference>
<dbReference type="GeneTree" id="ENSGT00940000155520"/>
<dbReference type="HOGENOM" id="CLU_024513_0_1_1"/>
<dbReference type="InParanoid" id="Q9VPT8"/>
<dbReference type="OMA" id="FHQNNFA"/>
<dbReference type="OrthoDB" id="1914176at2759"/>
<dbReference type="PhylomeDB" id="Q9VPT8"/>
<dbReference type="Reactome" id="R-DME-159231">
    <property type="pathway name" value="Transport of Mature mRNA Derived from an Intronless Transcript"/>
</dbReference>
<dbReference type="Reactome" id="R-DME-72187">
    <property type="pathway name" value="mRNA 3'-end processing"/>
</dbReference>
<dbReference type="Reactome" id="R-DME-72203">
    <property type="pathway name" value="Processing of Capped Intron-Containing Pre-mRNA"/>
</dbReference>
<dbReference type="Reactome" id="R-DME-73856">
    <property type="pathway name" value="RNA Polymerase II Transcription Termination"/>
</dbReference>
<dbReference type="Reactome" id="R-DME-77595">
    <property type="pathway name" value="Processing of Intronless Pre-mRNAs"/>
</dbReference>
<dbReference type="SignaLink" id="Q9VPT8"/>
<dbReference type="BioGRID-ORCS" id="33259">
    <property type="hits" value="0 hits in 3 CRISPR screens"/>
</dbReference>
<dbReference type="GenomeRNAi" id="33259"/>
<dbReference type="PRO" id="PR:Q9VPT8"/>
<dbReference type="Proteomes" id="UP000000803">
    <property type="component" value="Chromosome 2L"/>
</dbReference>
<dbReference type="Bgee" id="FBgn0015621">
    <property type="expression patterns" value="Expressed in T neuron T4c (Drosophila) in embryonic/larval optic lobe (Drosophila) and 39 other cell types or tissues"/>
</dbReference>
<dbReference type="GO" id="GO:0005847">
    <property type="term" value="C:mRNA cleavage and polyadenylation specificity factor complex"/>
    <property type="evidence" value="ECO:0000250"/>
    <property type="project" value="FlyBase"/>
</dbReference>
<dbReference type="GO" id="GO:0003723">
    <property type="term" value="F:RNA binding"/>
    <property type="evidence" value="ECO:0007669"/>
    <property type="project" value="UniProtKB-KW"/>
</dbReference>
<dbReference type="GO" id="GO:0004521">
    <property type="term" value="F:RNA endonuclease activity"/>
    <property type="evidence" value="ECO:0000314"/>
    <property type="project" value="FlyBase"/>
</dbReference>
<dbReference type="GO" id="GO:0008270">
    <property type="term" value="F:zinc ion binding"/>
    <property type="evidence" value="ECO:0007669"/>
    <property type="project" value="UniProtKB-KW"/>
</dbReference>
<dbReference type="GO" id="GO:0006397">
    <property type="term" value="P:mRNA processing"/>
    <property type="evidence" value="ECO:0000250"/>
    <property type="project" value="FlyBase"/>
</dbReference>
<dbReference type="FunFam" id="4.10.1000.10:FF:000005">
    <property type="entry name" value="cleavage and polyadenylation specificity factor subunit 4"/>
    <property type="match status" value="1"/>
</dbReference>
<dbReference type="Gene3D" id="4.10.1000.10">
    <property type="entry name" value="Zinc finger, CCCH-type"/>
    <property type="match status" value="2"/>
</dbReference>
<dbReference type="Gene3D" id="4.10.60.10">
    <property type="entry name" value="Zinc finger, CCHC-type"/>
    <property type="match status" value="1"/>
</dbReference>
<dbReference type="InterPro" id="IPR045348">
    <property type="entry name" value="CPSF4/Yth1"/>
</dbReference>
<dbReference type="InterPro" id="IPR000571">
    <property type="entry name" value="Znf_CCCH"/>
</dbReference>
<dbReference type="InterPro" id="IPR036855">
    <property type="entry name" value="Znf_CCCH_sf"/>
</dbReference>
<dbReference type="InterPro" id="IPR001878">
    <property type="entry name" value="Znf_CCHC"/>
</dbReference>
<dbReference type="InterPro" id="IPR036875">
    <property type="entry name" value="Znf_CCHC_sf"/>
</dbReference>
<dbReference type="PANTHER" id="PTHR23102:SF24">
    <property type="entry name" value="CLEAVAGE AND POLYADENYLATION SPECIFICITY FACTOR SUBUNIT 4"/>
    <property type="match status" value="1"/>
</dbReference>
<dbReference type="PANTHER" id="PTHR23102">
    <property type="entry name" value="CLEAVAGE AND POLYADENYLATION SPECIFICITY FACTOR SUBUNIT 4-RELATED"/>
    <property type="match status" value="1"/>
</dbReference>
<dbReference type="Pfam" id="PF00098">
    <property type="entry name" value="zf-CCHC"/>
    <property type="match status" value="2"/>
</dbReference>
<dbReference type="Pfam" id="PF18345">
    <property type="entry name" value="zf_CCCH_4"/>
    <property type="match status" value="1"/>
</dbReference>
<dbReference type="SMART" id="SM00343">
    <property type="entry name" value="ZnF_C2HC"/>
    <property type="match status" value="2"/>
</dbReference>
<dbReference type="SMART" id="SM00356">
    <property type="entry name" value="ZnF_C3H1"/>
    <property type="match status" value="5"/>
</dbReference>
<dbReference type="SUPFAM" id="SSF90229">
    <property type="entry name" value="CCCH zinc finger"/>
    <property type="match status" value="1"/>
</dbReference>
<dbReference type="SUPFAM" id="SSF57756">
    <property type="entry name" value="Retrovirus zinc finger-like domains"/>
    <property type="match status" value="2"/>
</dbReference>
<dbReference type="PROSITE" id="PS50103">
    <property type="entry name" value="ZF_C3H1"/>
    <property type="match status" value="5"/>
</dbReference>
<dbReference type="PROSITE" id="PS50158">
    <property type="entry name" value="ZF_CCHC"/>
    <property type="match status" value="2"/>
</dbReference>
<comment type="function">
    <text evidence="6 7">Component of the cleavage and polyadenylation specificity factor (CPSF) complex that plays a key role in pre-mRNA 3'-end formation, recognizing the AAUAAA signal sequence and interacting with poly(A) polymerase and other factors to bring about cleavage and poly(A) addition. Has endonuclease activity. Binds RNA polymers with a preference for G- and/or C-rich clusters. Binds single-stranded DNA non-specifically.</text>
</comment>
<comment type="subunit">
    <text evidence="5">Component of the cleavage and polyadenylation specificity factor (CPSF) complex, composed of at least Clp, Cpsf73, Cpsf100 and Cpsf160.</text>
</comment>
<comment type="subcellular location">
    <subcellularLocation>
        <location evidence="7">Nucleus</location>
    </subcellularLocation>
</comment>
<comment type="tissue specificity">
    <text evidence="6 7">During oogenesis, expression is detected in the germarium, in nurse cells, in the oocyte, and in the somatically derived follicular epithelial cells (at protein level). At oogenesis stage 12, nurse cells degenerate and their content is transferred into the oocyte. In larvae, expressed in all organs and disks (at protein level). In the larval salivary gland, expression is initially confined to cells at the anterior end but later expands throughout the entire gland (at protein level).</text>
</comment>
<comment type="developmental stage">
    <text evidence="6 7">Expressed both maternally and zygotically. During embryogenesis expressed only at transcript level. Expressed in larvae (at protein level), pupae and adults. Initial embryonic expression is maternally derived, then gradually decreases until third-instar larvae when there is a burst of zygotic expression. Most of the female expression is ovarian (at protein level).</text>
</comment>
<comment type="domain">
    <text evidence="6">The N-terminal region containing the five C3H1-type zinc fingers is essential for endonuclease activity.</text>
</comment>
<comment type="domain">
    <text evidence="7">The C-terminal region containing the two CCHC-type zinc fingers confers a binding preference for RNAs that contain G- and/or C-rich clusters.</text>
</comment>
<comment type="sequence caution" evidence="8">
    <conflict type="erroneous initiation">
        <sequence resource="EMBL-CDS" id="ABK57069"/>
    </conflict>
    <text>Extended N-terminus.</text>
</comment>